<dbReference type="EC" id="3.1.26.4" evidence="1"/>
<dbReference type="EMBL" id="CP000936">
    <property type="protein sequence ID" value="ACA36311.1"/>
    <property type="molecule type" value="Genomic_DNA"/>
</dbReference>
<dbReference type="RefSeq" id="WP_000201131.1">
    <property type="nucleotide sequence ID" value="NC_010380.1"/>
</dbReference>
<dbReference type="SMR" id="B1IBW1"/>
<dbReference type="KEGG" id="spv:SPH_1274"/>
<dbReference type="HOGENOM" id="CLU_036532_2_1_9"/>
<dbReference type="Proteomes" id="UP000002163">
    <property type="component" value="Chromosome"/>
</dbReference>
<dbReference type="GO" id="GO:0005737">
    <property type="term" value="C:cytoplasm"/>
    <property type="evidence" value="ECO:0007669"/>
    <property type="project" value="UniProtKB-SubCell"/>
</dbReference>
<dbReference type="GO" id="GO:0032299">
    <property type="term" value="C:ribonuclease H2 complex"/>
    <property type="evidence" value="ECO:0007669"/>
    <property type="project" value="TreeGrafter"/>
</dbReference>
<dbReference type="GO" id="GO:0030145">
    <property type="term" value="F:manganese ion binding"/>
    <property type="evidence" value="ECO:0007669"/>
    <property type="project" value="UniProtKB-UniRule"/>
</dbReference>
<dbReference type="GO" id="GO:0003723">
    <property type="term" value="F:RNA binding"/>
    <property type="evidence" value="ECO:0007669"/>
    <property type="project" value="InterPro"/>
</dbReference>
<dbReference type="GO" id="GO:0004523">
    <property type="term" value="F:RNA-DNA hybrid ribonuclease activity"/>
    <property type="evidence" value="ECO:0007669"/>
    <property type="project" value="UniProtKB-UniRule"/>
</dbReference>
<dbReference type="GO" id="GO:0043137">
    <property type="term" value="P:DNA replication, removal of RNA primer"/>
    <property type="evidence" value="ECO:0007669"/>
    <property type="project" value="TreeGrafter"/>
</dbReference>
<dbReference type="GO" id="GO:0006298">
    <property type="term" value="P:mismatch repair"/>
    <property type="evidence" value="ECO:0007669"/>
    <property type="project" value="TreeGrafter"/>
</dbReference>
<dbReference type="CDD" id="cd07182">
    <property type="entry name" value="RNase_HII_bacteria_HII_like"/>
    <property type="match status" value="1"/>
</dbReference>
<dbReference type="FunFam" id="3.30.420.10:FF:000006">
    <property type="entry name" value="Ribonuclease HII"/>
    <property type="match status" value="1"/>
</dbReference>
<dbReference type="Gene3D" id="3.30.420.10">
    <property type="entry name" value="Ribonuclease H-like superfamily/Ribonuclease H"/>
    <property type="match status" value="1"/>
</dbReference>
<dbReference type="HAMAP" id="MF_00052_B">
    <property type="entry name" value="RNase_HII_B"/>
    <property type="match status" value="1"/>
</dbReference>
<dbReference type="InterPro" id="IPR022898">
    <property type="entry name" value="RNase_HII"/>
</dbReference>
<dbReference type="InterPro" id="IPR001352">
    <property type="entry name" value="RNase_HII/HIII"/>
</dbReference>
<dbReference type="InterPro" id="IPR024567">
    <property type="entry name" value="RNase_HII/HIII_dom"/>
</dbReference>
<dbReference type="InterPro" id="IPR012337">
    <property type="entry name" value="RNaseH-like_sf"/>
</dbReference>
<dbReference type="InterPro" id="IPR036397">
    <property type="entry name" value="RNaseH_sf"/>
</dbReference>
<dbReference type="NCBIfam" id="NF000594">
    <property type="entry name" value="PRK00015.1-1"/>
    <property type="match status" value="1"/>
</dbReference>
<dbReference type="NCBIfam" id="NF000595">
    <property type="entry name" value="PRK00015.1-3"/>
    <property type="match status" value="1"/>
</dbReference>
<dbReference type="PANTHER" id="PTHR10954">
    <property type="entry name" value="RIBONUCLEASE H2 SUBUNIT A"/>
    <property type="match status" value="1"/>
</dbReference>
<dbReference type="PANTHER" id="PTHR10954:SF18">
    <property type="entry name" value="RIBONUCLEASE HII"/>
    <property type="match status" value="1"/>
</dbReference>
<dbReference type="Pfam" id="PF01351">
    <property type="entry name" value="RNase_HII"/>
    <property type="match status" value="1"/>
</dbReference>
<dbReference type="SUPFAM" id="SSF53098">
    <property type="entry name" value="Ribonuclease H-like"/>
    <property type="match status" value="1"/>
</dbReference>
<dbReference type="PROSITE" id="PS51975">
    <property type="entry name" value="RNASE_H_2"/>
    <property type="match status" value="1"/>
</dbReference>
<organism>
    <name type="scientific">Streptococcus pneumoniae (strain Hungary19A-6)</name>
    <dbReference type="NCBI Taxonomy" id="487214"/>
    <lineage>
        <taxon>Bacteria</taxon>
        <taxon>Bacillati</taxon>
        <taxon>Bacillota</taxon>
        <taxon>Bacilli</taxon>
        <taxon>Lactobacillales</taxon>
        <taxon>Streptococcaceae</taxon>
        <taxon>Streptococcus</taxon>
    </lineage>
</organism>
<evidence type="ECO:0000255" key="1">
    <source>
        <dbReference type="HAMAP-Rule" id="MF_00052"/>
    </source>
</evidence>
<evidence type="ECO:0000255" key="2">
    <source>
        <dbReference type="PROSITE-ProRule" id="PRU01319"/>
    </source>
</evidence>
<comment type="function">
    <text evidence="1">Endonuclease that specifically degrades the RNA of RNA-DNA hybrids.</text>
</comment>
<comment type="catalytic activity">
    <reaction evidence="1">
        <text>Endonucleolytic cleavage to 5'-phosphomonoester.</text>
        <dbReference type="EC" id="3.1.26.4"/>
    </reaction>
</comment>
<comment type="cofactor">
    <cofactor evidence="1">
        <name>Mn(2+)</name>
        <dbReference type="ChEBI" id="CHEBI:29035"/>
    </cofactor>
    <cofactor evidence="1">
        <name>Mg(2+)</name>
        <dbReference type="ChEBI" id="CHEBI:18420"/>
    </cofactor>
    <text evidence="1">Manganese or magnesium. Binds 1 divalent metal ion per monomer in the absence of substrate. May bind a second metal ion after substrate binding.</text>
</comment>
<comment type="subcellular location">
    <subcellularLocation>
        <location evidence="1">Cytoplasm</location>
    </subcellularLocation>
</comment>
<comment type="similarity">
    <text evidence="1">Belongs to the RNase HII family.</text>
</comment>
<protein>
    <recommendedName>
        <fullName evidence="1">Ribonuclease HII</fullName>
        <shortName evidence="1">RNase HII</shortName>
        <ecNumber evidence="1">3.1.26.4</ecNumber>
    </recommendedName>
</protein>
<keyword id="KW-0963">Cytoplasm</keyword>
<keyword id="KW-0255">Endonuclease</keyword>
<keyword id="KW-0378">Hydrolase</keyword>
<keyword id="KW-0464">Manganese</keyword>
<keyword id="KW-0479">Metal-binding</keyword>
<keyword id="KW-0540">Nuclease</keyword>
<reference key="1">
    <citation type="journal article" date="2010" name="Genome Biol.">
        <title>Structure and dynamics of the pan-genome of Streptococcus pneumoniae and closely related species.</title>
        <authorList>
            <person name="Donati C."/>
            <person name="Hiller N.L."/>
            <person name="Tettelin H."/>
            <person name="Muzzi A."/>
            <person name="Croucher N.J."/>
            <person name="Angiuoli S.V."/>
            <person name="Oggioni M."/>
            <person name="Dunning Hotopp J.C."/>
            <person name="Hu F.Z."/>
            <person name="Riley D.R."/>
            <person name="Covacci A."/>
            <person name="Mitchell T.J."/>
            <person name="Bentley S.D."/>
            <person name="Kilian M."/>
            <person name="Ehrlich G.D."/>
            <person name="Rappuoli R."/>
            <person name="Moxon E.R."/>
            <person name="Masignani V."/>
        </authorList>
    </citation>
    <scope>NUCLEOTIDE SEQUENCE [LARGE SCALE GENOMIC DNA]</scope>
    <source>
        <strain>Hungary19A-6</strain>
    </source>
</reference>
<proteinExistence type="inferred from homology"/>
<gene>
    <name evidence="1" type="primary">rnhB</name>
    <name type="ordered locus">SPH_1274</name>
</gene>
<sequence>MATIKEIKELLVTVKELESPIFLELEKDNRSGVQKEISKRKRAIQAELDENLRLESMLSYEKELYKQGLTLIAGIDEVGRGPLAGPVVAAAVILPKNCKIKGLNDSKKIPKKKHLEIFQAVQDQALSIGIGIIDNQVIDQVNIYEATKLAMQEAISQLSPQPEHLLIDAMKLDLPISQTSIIKGDANSLSIAAASIVAKVTRDELMKEYDQQFPGYDFATNAGYGTAKHLEGLTKLGATPIHRTSFEPVKSLVLGKKES</sequence>
<feature type="chain" id="PRO_1000091660" description="Ribonuclease HII">
    <location>
        <begin position="1"/>
        <end position="259"/>
    </location>
</feature>
<feature type="domain" description="RNase H type-2" evidence="2">
    <location>
        <begin position="70"/>
        <end position="258"/>
    </location>
</feature>
<feature type="binding site" evidence="1">
    <location>
        <position position="76"/>
    </location>
    <ligand>
        <name>a divalent metal cation</name>
        <dbReference type="ChEBI" id="CHEBI:60240"/>
    </ligand>
</feature>
<feature type="binding site" evidence="1">
    <location>
        <position position="77"/>
    </location>
    <ligand>
        <name>a divalent metal cation</name>
        <dbReference type="ChEBI" id="CHEBI:60240"/>
    </ligand>
</feature>
<feature type="binding site" evidence="1">
    <location>
        <position position="168"/>
    </location>
    <ligand>
        <name>a divalent metal cation</name>
        <dbReference type="ChEBI" id="CHEBI:60240"/>
    </ligand>
</feature>
<accession>B1IBW1</accession>
<name>RNH2_STRPI</name>